<sequence length="362" mass="39544">MYSASVTAPVNIATLKYWGKRDKSLNLPTNSSISVTLSQDDLRTLTTASASESFEKDQLWLNGKLESLDTPRTQACLADLRKLRASIEQSPDTPKLSQMKLHIVSENNFPTAAGLASSAAGFAALVSAIAKLYELPQDMSELSKIARKGSGSACRSLFGGFVAWEMGTLPDGQDSKAVEIAPLEHWPSLRAVILVVSDDKKDTPSTTGMQSTVATSDLFAHRIAEVVPQRFEAMKKAILDKDFPKFAELTMKDSNSFHAVCLDSYPPIFYLNDTSKKIIKMVETINQQEVVAAYTFDAGPNAVIYYDEANQDKVLSLLYKHFGHVPGWKTHYTAETPVAGVSRIIQTSIGPGPQETSESLTK</sequence>
<name>MVD1_CANAL</name>
<protein>
    <recommendedName>
        <fullName evidence="8">Diphosphomevalonate decarboxylase</fullName>
        <ecNumber evidence="3">4.1.1.33</ecNumber>
    </recommendedName>
    <alternativeName>
        <fullName evidence="8">Mevalonate pyrophosphate decarboxylase</fullName>
        <shortName evidence="8">MPD</shortName>
    </alternativeName>
    <alternativeName>
        <fullName evidence="7">Mevalonate-5-diphosphate decarboxylase</fullName>
        <shortName evidence="8">MDD</shortName>
        <shortName evidence="8">MDDase</shortName>
    </alternativeName>
</protein>
<accession>A0A1D8PC43</accession>
<organism>
    <name type="scientific">Candida albicans (strain SC5314 / ATCC MYA-2876)</name>
    <name type="common">Yeast</name>
    <dbReference type="NCBI Taxonomy" id="237561"/>
    <lineage>
        <taxon>Eukaryota</taxon>
        <taxon>Fungi</taxon>
        <taxon>Dikarya</taxon>
        <taxon>Ascomycota</taxon>
        <taxon>Saccharomycotina</taxon>
        <taxon>Pichiomycetes</taxon>
        <taxon>Debaryomycetaceae</taxon>
        <taxon>Candida/Lodderomyces clade</taxon>
        <taxon>Candida</taxon>
    </lineage>
</organism>
<gene>
    <name evidence="7" type="primary">MVD</name>
    <name type="synonym">MVD1</name>
    <name type="ordered locus">orf19.6105</name>
    <name type="ORF">CAALFM_C100070WA</name>
</gene>
<comment type="function">
    <text evidence="3 9">Diphosphomevalonate decarboxylase; part of the second module of ergosterol biosynthesis pathway that includes the middle steps of the pathway (PubMed:12073030). MVD1 converts diphosphomevalonate into isopentenyl diphosphate (PubMed:12073030). The second module is carried out in the vacuole and involves the formation of farnesyl diphosphate, which is also an important intermediate in the biosynthesis of ubiquinone, dolichol, heme and prenylated proteins. Activity by the mevalonate kinase ERG12 first converts mevalonate into 5-phosphomevalonate. 5-phosphomevalonate is then further converted to 5-diphosphomevalonate by the phosphomevalonate kinase ERG8. The diphosphomevalonate decarboxylase MVD then produces isopentenyl diphosphate. The isopentenyl-diphosphate delta-isomerase IDI1 then catalyzes the 1,3-allylic rearrangement of the homoallylic substrate isopentenyl (IPP) to its highly electrophilic allylic isomer, dimethylallyl diphosphate (DMAPP). Finally the farnesyl diphosphate synthase ERG20 catalyzes the sequential condensation of isopentenyl pyrophosphate with dimethylallyl pyrophosphate, and then with the resultant geranylpyrophosphate to the ultimate product farnesyl pyrophosphate (Probable).</text>
</comment>
<comment type="catalytic activity">
    <reaction evidence="3">
        <text>(R)-5-diphosphomevalonate + ATP = isopentenyl diphosphate + ADP + phosphate + CO2</text>
        <dbReference type="Rhea" id="RHEA:23732"/>
        <dbReference type="ChEBI" id="CHEBI:16526"/>
        <dbReference type="ChEBI" id="CHEBI:30616"/>
        <dbReference type="ChEBI" id="CHEBI:43474"/>
        <dbReference type="ChEBI" id="CHEBI:57557"/>
        <dbReference type="ChEBI" id="CHEBI:128769"/>
        <dbReference type="ChEBI" id="CHEBI:456216"/>
        <dbReference type="EC" id="4.1.1.33"/>
    </reaction>
    <physiologicalReaction direction="left-to-right" evidence="3">
        <dbReference type="Rhea" id="RHEA:23733"/>
    </physiologicalReaction>
</comment>
<comment type="pathway">
    <text evidence="3">Isoprenoid biosynthesis; isopentenyl diphosphate biosynthesis via mevalonate pathway; isopentenyl diphosphate from (R)-mevalonate: step 3/3.</text>
</comment>
<comment type="subunit">
    <text evidence="2">Homodimer.</text>
</comment>
<comment type="induction">
    <text evidence="3 4 5 6">Expression is high in media supplemented with glucose, moderate in acetate, galactose and low in maltose medium (PubMed:12073030). Expression is higher in the yeast phase than in the hyphal phase of growth as well as higher in the exponential than in the stationary phase (PubMed:12073030). Expression is affected by antifungals (PubMed:15917516). Expression is repressed during biofilm formation (PubMed:19527170, PubMed:22265407).</text>
</comment>
<comment type="similarity">
    <text evidence="8">Belongs to the diphosphomevalonate decarboxylase family.</text>
</comment>
<dbReference type="EC" id="4.1.1.33" evidence="3"/>
<dbReference type="EMBL" id="CP017623">
    <property type="protein sequence ID" value="AOW25709.1"/>
    <property type="molecule type" value="Genomic_DNA"/>
</dbReference>
<dbReference type="RefSeq" id="XP_019330598.1">
    <property type="nucleotide sequence ID" value="XM_019475053.1"/>
</dbReference>
<dbReference type="SMR" id="A0A1D8PC43"/>
<dbReference type="FunCoup" id="A0A1D8PC43">
    <property type="interactions" value="707"/>
</dbReference>
<dbReference type="STRING" id="237561.A0A1D8PC43"/>
<dbReference type="EnsemblFungi" id="C1_00070W_A-T">
    <property type="protein sequence ID" value="C1_00070W_A-T-p1"/>
    <property type="gene ID" value="C1_00070W_A"/>
</dbReference>
<dbReference type="GeneID" id="3639306"/>
<dbReference type="KEGG" id="cal:CAALFM_C100070WA"/>
<dbReference type="CGD" id="CAL0000181620">
    <property type="gene designation" value="MVD"/>
</dbReference>
<dbReference type="VEuPathDB" id="FungiDB:C1_00070W_A"/>
<dbReference type="eggNOG" id="KOG2833">
    <property type="taxonomic scope" value="Eukaryota"/>
</dbReference>
<dbReference type="InParanoid" id="A0A1D8PC43"/>
<dbReference type="OMA" id="LTLHAMM"/>
<dbReference type="OrthoDB" id="10253702at2759"/>
<dbReference type="UniPathway" id="UPA00057">
    <property type="reaction ID" value="UER00100"/>
</dbReference>
<dbReference type="Proteomes" id="UP000000559">
    <property type="component" value="Chromosome 1"/>
</dbReference>
<dbReference type="GO" id="GO:0005829">
    <property type="term" value="C:cytosol"/>
    <property type="evidence" value="ECO:0000318"/>
    <property type="project" value="GO_Central"/>
</dbReference>
<dbReference type="GO" id="GO:0005524">
    <property type="term" value="F:ATP binding"/>
    <property type="evidence" value="ECO:0007669"/>
    <property type="project" value="UniProtKB-KW"/>
</dbReference>
<dbReference type="GO" id="GO:0004163">
    <property type="term" value="F:diphosphomevalonate decarboxylase activity"/>
    <property type="evidence" value="ECO:0000316"/>
    <property type="project" value="CGD"/>
</dbReference>
<dbReference type="GO" id="GO:0019287">
    <property type="term" value="P:isopentenyl diphosphate biosynthetic process, mevalonate pathway"/>
    <property type="evidence" value="ECO:0000316"/>
    <property type="project" value="CGD"/>
</dbReference>
<dbReference type="GO" id="GO:0016126">
    <property type="term" value="P:sterol biosynthetic process"/>
    <property type="evidence" value="ECO:0000316"/>
    <property type="project" value="CGD"/>
</dbReference>
<dbReference type="FunFam" id="3.30.230.10:FF:000018">
    <property type="entry name" value="Diphosphomevalonate decarboxylase"/>
    <property type="match status" value="1"/>
</dbReference>
<dbReference type="Gene3D" id="3.30.230.10">
    <property type="match status" value="1"/>
</dbReference>
<dbReference type="Gene3D" id="3.30.70.890">
    <property type="entry name" value="GHMP kinase, C-terminal domain"/>
    <property type="match status" value="1"/>
</dbReference>
<dbReference type="InterPro" id="IPR036554">
    <property type="entry name" value="GHMP_kinase_C_sf"/>
</dbReference>
<dbReference type="InterPro" id="IPR005935">
    <property type="entry name" value="Mev_decarb"/>
</dbReference>
<dbReference type="InterPro" id="IPR029765">
    <property type="entry name" value="Mev_diP_decarb"/>
</dbReference>
<dbReference type="InterPro" id="IPR053859">
    <property type="entry name" value="MVD-like_N"/>
</dbReference>
<dbReference type="InterPro" id="IPR041431">
    <property type="entry name" value="Mvd1_C"/>
</dbReference>
<dbReference type="InterPro" id="IPR020568">
    <property type="entry name" value="Ribosomal_Su5_D2-typ_SF"/>
</dbReference>
<dbReference type="InterPro" id="IPR014721">
    <property type="entry name" value="Ribsml_uS5_D2-typ_fold_subgr"/>
</dbReference>
<dbReference type="NCBIfam" id="TIGR01240">
    <property type="entry name" value="mevDPdecarb"/>
    <property type="match status" value="1"/>
</dbReference>
<dbReference type="PANTHER" id="PTHR10977">
    <property type="entry name" value="DIPHOSPHOMEVALONATE DECARBOXYLASE"/>
    <property type="match status" value="1"/>
</dbReference>
<dbReference type="PANTHER" id="PTHR10977:SF3">
    <property type="entry name" value="DIPHOSPHOMEVALONATE DECARBOXYLASE"/>
    <property type="match status" value="1"/>
</dbReference>
<dbReference type="Pfam" id="PF18376">
    <property type="entry name" value="MDD_C"/>
    <property type="match status" value="1"/>
</dbReference>
<dbReference type="Pfam" id="PF22700">
    <property type="entry name" value="MVD-like_N"/>
    <property type="match status" value="1"/>
</dbReference>
<dbReference type="PIRSF" id="PIRSF015950">
    <property type="entry name" value="Mev_P_decrbx"/>
    <property type="match status" value="1"/>
</dbReference>
<dbReference type="SUPFAM" id="SSF55060">
    <property type="entry name" value="GHMP Kinase, C-terminal domain"/>
    <property type="match status" value="1"/>
</dbReference>
<dbReference type="SUPFAM" id="SSF54211">
    <property type="entry name" value="Ribosomal protein S5 domain 2-like"/>
    <property type="match status" value="1"/>
</dbReference>
<evidence type="ECO:0000250" key="1">
    <source>
        <dbReference type="UniProtKB" id="O23722"/>
    </source>
</evidence>
<evidence type="ECO:0000250" key="2">
    <source>
        <dbReference type="UniProtKB" id="P32377"/>
    </source>
</evidence>
<evidence type="ECO:0000269" key="3">
    <source>
    </source>
</evidence>
<evidence type="ECO:0000269" key="4">
    <source>
    </source>
</evidence>
<evidence type="ECO:0000269" key="5">
    <source>
    </source>
</evidence>
<evidence type="ECO:0000269" key="6">
    <source>
    </source>
</evidence>
<evidence type="ECO:0000303" key="7">
    <source>
    </source>
</evidence>
<evidence type="ECO:0000305" key="8"/>
<evidence type="ECO:0000305" key="9">
    <source>
    </source>
</evidence>
<feature type="chain" id="PRO_0000454168" description="Diphosphomevalonate decarboxylase">
    <location>
        <begin position="1"/>
        <end position="362"/>
    </location>
</feature>
<feature type="binding site" evidence="1">
    <location>
        <begin position="17"/>
        <end position="20"/>
    </location>
    <ligand>
        <name>(R)-5-diphosphomevalonate</name>
        <dbReference type="ChEBI" id="CHEBI:57557"/>
    </ligand>
</feature>
<feature type="binding site" evidence="1">
    <location>
        <position position="72"/>
    </location>
    <ligand>
        <name>(R)-5-diphosphomevalonate</name>
        <dbReference type="ChEBI" id="CHEBI:57557"/>
    </ligand>
</feature>
<feature type="binding site" evidence="1">
    <location>
        <begin position="150"/>
        <end position="155"/>
    </location>
    <ligand>
        <name>(R)-5-diphosphomevalonate</name>
        <dbReference type="ChEBI" id="CHEBI:57557"/>
    </ligand>
</feature>
<feature type="binding site" evidence="1">
    <location>
        <position position="206"/>
    </location>
    <ligand>
        <name>(R)-5-diphosphomevalonate</name>
        <dbReference type="ChEBI" id="CHEBI:57557"/>
    </ligand>
</feature>
<keyword id="KW-0067">ATP-binding</keyword>
<keyword id="KW-0444">Lipid biosynthesis</keyword>
<keyword id="KW-0443">Lipid metabolism</keyword>
<keyword id="KW-0456">Lyase</keyword>
<keyword id="KW-0547">Nucleotide-binding</keyword>
<keyword id="KW-1185">Reference proteome</keyword>
<keyword id="KW-0752">Steroid biosynthesis</keyword>
<keyword id="KW-0753">Steroid metabolism</keyword>
<keyword id="KW-0756">Sterol biosynthesis</keyword>
<keyword id="KW-1207">Sterol metabolism</keyword>
<reference key="1">
    <citation type="journal article" date="2004" name="Proc. Natl. Acad. Sci. U.S.A.">
        <title>The diploid genome sequence of Candida albicans.</title>
        <authorList>
            <person name="Jones T."/>
            <person name="Federspiel N.A."/>
            <person name="Chibana H."/>
            <person name="Dungan J."/>
            <person name="Kalman S."/>
            <person name="Magee B.B."/>
            <person name="Newport G."/>
            <person name="Thorstenson Y.R."/>
            <person name="Agabian N."/>
            <person name="Magee P.T."/>
            <person name="Davis R.W."/>
            <person name="Scherer S."/>
        </authorList>
    </citation>
    <scope>NUCLEOTIDE SEQUENCE [LARGE SCALE GENOMIC DNA]</scope>
    <source>
        <strain>SC5314 / ATCC MYA-2876</strain>
    </source>
</reference>
<reference key="2">
    <citation type="journal article" date="2007" name="Genome Biol.">
        <title>Assembly of the Candida albicans genome into sixteen supercontigs aligned on the eight chromosomes.</title>
        <authorList>
            <person name="van het Hoog M."/>
            <person name="Rast T.J."/>
            <person name="Martchenko M."/>
            <person name="Grindle S."/>
            <person name="Dignard D."/>
            <person name="Hogues H."/>
            <person name="Cuomo C."/>
            <person name="Berriman M."/>
            <person name="Scherer S."/>
            <person name="Magee B.B."/>
            <person name="Whiteway M."/>
            <person name="Chibana H."/>
            <person name="Nantel A."/>
            <person name="Magee P.T."/>
        </authorList>
    </citation>
    <scope>GENOME REANNOTATION</scope>
    <source>
        <strain>SC5314 / ATCC MYA-2876</strain>
    </source>
</reference>
<reference key="3">
    <citation type="journal article" date="2013" name="Genome Biol.">
        <title>Assembly of a phased diploid Candida albicans genome facilitates allele-specific measurements and provides a simple model for repeat and indel structure.</title>
        <authorList>
            <person name="Muzzey D."/>
            <person name="Schwartz K."/>
            <person name="Weissman J.S."/>
            <person name="Sherlock G."/>
        </authorList>
    </citation>
    <scope>NUCLEOTIDE SEQUENCE [LARGE SCALE GENOMIC DNA]</scope>
    <scope>GENOME REANNOTATION</scope>
    <source>
        <strain>SC5314 / ATCC MYA-2876</strain>
    </source>
</reference>
<reference key="4">
    <citation type="journal article" date="2002" name="Mol. Genet. Genomics">
        <title>Characterization, heterologous expression and functional analysis of mevalonate diphosphate decarboxylase gene (MVD) of Candida albicans.</title>
        <authorList>
            <person name="Dassanayake R.S."/>
            <person name="Cao L."/>
            <person name="Samaranayake L.P."/>
            <person name="Berges T."/>
        </authorList>
    </citation>
    <scope>INDUCTION</scope>
    <scope>FUNCTION</scope>
    <scope>CATALYTIC ACTIVITY</scope>
    <scope>PATHWAY</scope>
</reference>
<reference key="5">
    <citation type="journal article" date="2003" name="Med. Mycol.">
        <title>Antifungal activity of fluconazole in combination with lovastatin and their effects on gene expression in the ergosterol and prenylation pathways in Candida albicans.</title>
        <authorList>
            <person name="Song J.L."/>
            <person name="Lyons C.N."/>
            <person name="Holleman S."/>
            <person name="Oliver B.G."/>
            <person name="White T.C."/>
        </authorList>
    </citation>
    <scope>FUNCTION</scope>
</reference>
<reference key="6">
    <citation type="journal article" date="2005" name="Antimicrob. Agents Chemother.">
        <title>Genome-wide expression profiling of the response to azole, polyene, echinocandin, and pyrimidine antifungal agents in Candida albicans.</title>
        <authorList>
            <person name="Liu T.T."/>
            <person name="Lee R.E."/>
            <person name="Barker K.S."/>
            <person name="Lee R.E."/>
            <person name="Wei L."/>
            <person name="Homayouni R."/>
            <person name="Rogers P.D."/>
        </authorList>
    </citation>
    <scope>INDUCTION</scope>
</reference>
<reference key="7">
    <citation type="journal article" date="2009" name="J. Infect. Dis.">
        <title>Time course global gene expression analysis of an in vivo Candida biofilm.</title>
        <authorList>
            <person name="Nett J.E."/>
            <person name="Lepak A.J."/>
            <person name="Marchillo K."/>
            <person name="Andes D.R."/>
        </authorList>
    </citation>
    <scope>INDUCTION</scope>
</reference>
<reference key="8">
    <citation type="journal article" date="2012" name="Cell">
        <title>A recently evolved transcriptional network controls biofilm development in Candida albicans.</title>
        <authorList>
            <person name="Nobile C.J."/>
            <person name="Fox E.P."/>
            <person name="Nett J.E."/>
            <person name="Sorrells T.R."/>
            <person name="Mitrovich Q.M."/>
            <person name="Hernday A.D."/>
            <person name="Tuch B.B."/>
            <person name="Andes D.R."/>
            <person name="Johnson A.D."/>
        </authorList>
    </citation>
    <scope>INDUCTION</scope>
</reference>
<proteinExistence type="evidence at protein level"/>